<dbReference type="EC" id="3.4.23.36" evidence="1"/>
<dbReference type="EMBL" id="CU928162">
    <property type="protein sequence ID" value="CAR06247.1"/>
    <property type="molecule type" value="Genomic_DNA"/>
</dbReference>
<dbReference type="RefSeq" id="WP_000083369.1">
    <property type="nucleotide sequence ID" value="NC_011745.1"/>
</dbReference>
<dbReference type="SMR" id="B7MNN2"/>
<dbReference type="MEROPS" id="A08.001"/>
<dbReference type="GeneID" id="75169926"/>
<dbReference type="KEGG" id="ecq:ECED1_0024"/>
<dbReference type="HOGENOM" id="CLU_083252_4_0_6"/>
<dbReference type="UniPathway" id="UPA00665"/>
<dbReference type="Proteomes" id="UP000000748">
    <property type="component" value="Chromosome"/>
</dbReference>
<dbReference type="GO" id="GO:0005886">
    <property type="term" value="C:plasma membrane"/>
    <property type="evidence" value="ECO:0007669"/>
    <property type="project" value="UniProtKB-SubCell"/>
</dbReference>
<dbReference type="GO" id="GO:0004190">
    <property type="term" value="F:aspartic-type endopeptidase activity"/>
    <property type="evidence" value="ECO:0007669"/>
    <property type="project" value="UniProtKB-UniRule"/>
</dbReference>
<dbReference type="GO" id="GO:0006508">
    <property type="term" value="P:proteolysis"/>
    <property type="evidence" value="ECO:0007669"/>
    <property type="project" value="UniProtKB-KW"/>
</dbReference>
<dbReference type="HAMAP" id="MF_00161">
    <property type="entry name" value="LspA"/>
    <property type="match status" value="1"/>
</dbReference>
<dbReference type="InterPro" id="IPR001872">
    <property type="entry name" value="Peptidase_A8"/>
</dbReference>
<dbReference type="NCBIfam" id="TIGR00077">
    <property type="entry name" value="lspA"/>
    <property type="match status" value="1"/>
</dbReference>
<dbReference type="PANTHER" id="PTHR33695">
    <property type="entry name" value="LIPOPROTEIN SIGNAL PEPTIDASE"/>
    <property type="match status" value="1"/>
</dbReference>
<dbReference type="PANTHER" id="PTHR33695:SF1">
    <property type="entry name" value="LIPOPROTEIN SIGNAL PEPTIDASE"/>
    <property type="match status" value="1"/>
</dbReference>
<dbReference type="Pfam" id="PF01252">
    <property type="entry name" value="Peptidase_A8"/>
    <property type="match status" value="1"/>
</dbReference>
<dbReference type="PRINTS" id="PR00781">
    <property type="entry name" value="LIPOSIGPTASE"/>
</dbReference>
<dbReference type="PROSITE" id="PS00855">
    <property type="entry name" value="SPASE_II"/>
    <property type="match status" value="1"/>
</dbReference>
<gene>
    <name evidence="1" type="primary">lspA</name>
    <name type="ordered locus">ECED1_0024</name>
</gene>
<keyword id="KW-0064">Aspartyl protease</keyword>
<keyword id="KW-0997">Cell inner membrane</keyword>
<keyword id="KW-1003">Cell membrane</keyword>
<keyword id="KW-0378">Hydrolase</keyword>
<keyword id="KW-0472">Membrane</keyword>
<keyword id="KW-0645">Protease</keyword>
<keyword id="KW-0812">Transmembrane</keyword>
<keyword id="KW-1133">Transmembrane helix</keyword>
<accession>B7MNN2</accession>
<evidence type="ECO:0000255" key="1">
    <source>
        <dbReference type="HAMAP-Rule" id="MF_00161"/>
    </source>
</evidence>
<protein>
    <recommendedName>
        <fullName evidence="1">Lipoprotein signal peptidase</fullName>
        <ecNumber evidence="1">3.4.23.36</ecNumber>
    </recommendedName>
    <alternativeName>
        <fullName evidence="1">Prolipoprotein signal peptidase</fullName>
    </alternativeName>
    <alternativeName>
        <fullName evidence="1">Signal peptidase II</fullName>
        <shortName evidence="1">SPase II</shortName>
    </alternativeName>
</protein>
<reference key="1">
    <citation type="journal article" date="2009" name="PLoS Genet.">
        <title>Organised genome dynamics in the Escherichia coli species results in highly diverse adaptive paths.</title>
        <authorList>
            <person name="Touchon M."/>
            <person name="Hoede C."/>
            <person name="Tenaillon O."/>
            <person name="Barbe V."/>
            <person name="Baeriswyl S."/>
            <person name="Bidet P."/>
            <person name="Bingen E."/>
            <person name="Bonacorsi S."/>
            <person name="Bouchier C."/>
            <person name="Bouvet O."/>
            <person name="Calteau A."/>
            <person name="Chiapello H."/>
            <person name="Clermont O."/>
            <person name="Cruveiller S."/>
            <person name="Danchin A."/>
            <person name="Diard M."/>
            <person name="Dossat C."/>
            <person name="Karoui M.E."/>
            <person name="Frapy E."/>
            <person name="Garry L."/>
            <person name="Ghigo J.M."/>
            <person name="Gilles A.M."/>
            <person name="Johnson J."/>
            <person name="Le Bouguenec C."/>
            <person name="Lescat M."/>
            <person name="Mangenot S."/>
            <person name="Martinez-Jehanne V."/>
            <person name="Matic I."/>
            <person name="Nassif X."/>
            <person name="Oztas S."/>
            <person name="Petit M.A."/>
            <person name="Pichon C."/>
            <person name="Rouy Z."/>
            <person name="Ruf C.S."/>
            <person name="Schneider D."/>
            <person name="Tourret J."/>
            <person name="Vacherie B."/>
            <person name="Vallenet D."/>
            <person name="Medigue C."/>
            <person name="Rocha E.P.C."/>
            <person name="Denamur E."/>
        </authorList>
    </citation>
    <scope>NUCLEOTIDE SEQUENCE [LARGE SCALE GENOMIC DNA]</scope>
    <source>
        <strain>ED1a</strain>
    </source>
</reference>
<name>LSPA_ECO81</name>
<comment type="function">
    <text evidence="1">This protein specifically catalyzes the removal of signal peptides from prolipoproteins.</text>
</comment>
<comment type="catalytic activity">
    <reaction evidence="1">
        <text>Release of signal peptides from bacterial membrane prolipoproteins. Hydrolyzes -Xaa-Yaa-Zaa-|-(S,diacylglyceryl)Cys-, in which Xaa is hydrophobic (preferably Leu), and Yaa (Ala or Ser) and Zaa (Gly or Ala) have small, neutral side chains.</text>
        <dbReference type="EC" id="3.4.23.36"/>
    </reaction>
</comment>
<comment type="pathway">
    <text evidence="1">Protein modification; lipoprotein biosynthesis (signal peptide cleavage).</text>
</comment>
<comment type="subcellular location">
    <subcellularLocation>
        <location evidence="1">Cell inner membrane</location>
        <topology evidence="1">Multi-pass membrane protein</topology>
    </subcellularLocation>
</comment>
<comment type="similarity">
    <text evidence="1">Belongs to the peptidase A8 family.</text>
</comment>
<feature type="chain" id="PRO_1000123497" description="Lipoprotein signal peptidase">
    <location>
        <begin position="1"/>
        <end position="164"/>
    </location>
</feature>
<feature type="transmembrane region" description="Helical" evidence="1">
    <location>
        <begin position="12"/>
        <end position="32"/>
    </location>
</feature>
<feature type="transmembrane region" description="Helical" evidence="1">
    <location>
        <begin position="70"/>
        <end position="90"/>
    </location>
</feature>
<feature type="transmembrane region" description="Helical" evidence="1">
    <location>
        <begin position="102"/>
        <end position="122"/>
    </location>
</feature>
<feature type="transmembrane region" description="Helical" evidence="1">
    <location>
        <begin position="137"/>
        <end position="157"/>
    </location>
</feature>
<feature type="active site" evidence="1">
    <location>
        <position position="123"/>
    </location>
</feature>
<feature type="active site" evidence="1">
    <location>
        <position position="141"/>
    </location>
</feature>
<sequence>MSQSICSTGLRWLWLVVVVLIIDLGSKYLILQNFALGDTVPLFPSLNLHYARNYGAAFSFLADSGGWQRWFFAGIAIGISVILAVMMYRSKATQKLNNIAYALIIGGALGNLFDRLWHGFVVDMIDFYVGDWHFATFNLADTAICVGAALIVLEGFLPSKAKKQ</sequence>
<proteinExistence type="inferred from homology"/>
<organism>
    <name type="scientific">Escherichia coli O81 (strain ED1a)</name>
    <dbReference type="NCBI Taxonomy" id="585397"/>
    <lineage>
        <taxon>Bacteria</taxon>
        <taxon>Pseudomonadati</taxon>
        <taxon>Pseudomonadota</taxon>
        <taxon>Gammaproteobacteria</taxon>
        <taxon>Enterobacterales</taxon>
        <taxon>Enterobacteriaceae</taxon>
        <taxon>Escherichia</taxon>
    </lineage>
</organism>